<proteinExistence type="inferred from homology"/>
<dbReference type="EMBL" id="CP009806">
    <property type="protein sequence ID" value="ATZ47098.1"/>
    <property type="molecule type" value="Genomic_DNA"/>
</dbReference>
<dbReference type="SMR" id="A6S4J2"/>
<dbReference type="EnsemblFungi" id="Bcin02g04190.1">
    <property type="protein sequence ID" value="Bcin02p04190.1"/>
    <property type="gene ID" value="Bcin02g04190"/>
</dbReference>
<dbReference type="VEuPathDB" id="FungiDB:Bcin02g04190"/>
<dbReference type="OrthoDB" id="1847590at2759"/>
<dbReference type="Proteomes" id="UP000001798">
    <property type="component" value="Chromosome bcin02"/>
</dbReference>
<dbReference type="GO" id="GO:0005730">
    <property type="term" value="C:nucleolus"/>
    <property type="evidence" value="ECO:0007669"/>
    <property type="project" value="UniProtKB-SubCell"/>
</dbReference>
<dbReference type="GO" id="GO:0030687">
    <property type="term" value="C:preribosome, large subunit precursor"/>
    <property type="evidence" value="ECO:0007669"/>
    <property type="project" value="EnsemblFungi"/>
</dbReference>
<dbReference type="GO" id="GO:0000466">
    <property type="term" value="P:maturation of 5.8S rRNA from tricistronic rRNA transcript (SSU-rRNA, 5.8S rRNA, LSU-rRNA)"/>
    <property type="evidence" value="ECO:0007669"/>
    <property type="project" value="EnsemblFungi"/>
</dbReference>
<dbReference type="GO" id="GO:0000463">
    <property type="term" value="P:maturation of LSU-rRNA from tricistronic rRNA transcript (SSU-rRNA, 5.8S rRNA, LSU-rRNA)"/>
    <property type="evidence" value="ECO:0007669"/>
    <property type="project" value="EnsemblFungi"/>
</dbReference>
<dbReference type="CDD" id="cd11381">
    <property type="entry name" value="NSA2"/>
    <property type="match status" value="1"/>
</dbReference>
<dbReference type="FunFam" id="2.40.10.310:FF:000001">
    <property type="entry name" value="NSA2, ribosome biogenesis homolog"/>
    <property type="match status" value="1"/>
</dbReference>
<dbReference type="Gene3D" id="2.40.10.310">
    <property type="match status" value="1"/>
</dbReference>
<dbReference type="InterPro" id="IPR039411">
    <property type="entry name" value="NSA2_fam"/>
</dbReference>
<dbReference type="InterPro" id="IPR022309">
    <property type="entry name" value="Ribosomal_Se8/biogenesis_NSA2"/>
</dbReference>
<dbReference type="PANTHER" id="PTHR12642">
    <property type="entry name" value="RIBOSOME BIOGENESIS PROTEIN NSA2 HOMOLOG"/>
    <property type="match status" value="1"/>
</dbReference>
<dbReference type="Pfam" id="PF01201">
    <property type="entry name" value="Ribosomal_S8e"/>
    <property type="match status" value="1"/>
</dbReference>
<comment type="function">
    <text evidence="1">Involved in the biogenesis of the 60S ribosomal subunit. May play a part in the quality control of pre-60S particles (By similarity).</text>
</comment>
<comment type="subunit">
    <text evidence="2">Component of the pre-66S ribosomal particle. Interacts with NOP7 and RRP1. Interacts with RSA4 (via WD repeats).</text>
</comment>
<comment type="subcellular location">
    <subcellularLocation>
        <location evidence="1">Nucleus</location>
        <location evidence="1">Nucleolus</location>
    </subcellularLocation>
</comment>
<comment type="similarity">
    <text evidence="5">Belongs to the eukaryotic ribosomal protein eS8 family. Ribosome biogenesis protein NSA2 subfamily.</text>
</comment>
<organism>
    <name type="scientific">Botryotinia fuckeliana (strain B05.10)</name>
    <name type="common">Noble rot fungus</name>
    <name type="synonym">Botrytis cinerea</name>
    <dbReference type="NCBI Taxonomy" id="332648"/>
    <lineage>
        <taxon>Eukaryota</taxon>
        <taxon>Fungi</taxon>
        <taxon>Dikarya</taxon>
        <taxon>Ascomycota</taxon>
        <taxon>Pezizomycotina</taxon>
        <taxon>Leotiomycetes</taxon>
        <taxon>Helotiales</taxon>
        <taxon>Sclerotiniaceae</taxon>
        <taxon>Botrytis</taxon>
    </lineage>
</organism>
<protein>
    <recommendedName>
        <fullName>Ribosome biogenesis protein nsa2</fullName>
    </recommendedName>
</protein>
<feature type="chain" id="PRO_0000320411" description="Ribosome biogenesis protein nsa2">
    <location>
        <begin position="1"/>
        <end position="261"/>
    </location>
</feature>
<feature type="region of interest" description="Disordered" evidence="4">
    <location>
        <begin position="1"/>
        <end position="94"/>
    </location>
</feature>
<feature type="short sequence motif" description="Nuclear localization signal" evidence="3">
    <location>
        <begin position="10"/>
        <end position="17"/>
    </location>
</feature>
<feature type="compositionally biased region" description="Basic and acidic residues" evidence="4">
    <location>
        <begin position="1"/>
        <end position="40"/>
    </location>
</feature>
<feature type="compositionally biased region" description="Basic residues" evidence="4">
    <location>
        <begin position="51"/>
        <end position="65"/>
    </location>
</feature>
<keyword id="KW-0539">Nucleus</keyword>
<keyword id="KW-1185">Reference proteome</keyword>
<keyword id="KW-0687">Ribonucleoprotein</keyword>
<keyword id="KW-0690">Ribosome biogenesis</keyword>
<keyword id="KW-0698">rRNA processing</keyword>
<gene>
    <name type="primary">nsa2</name>
    <name type="ORF">BC1G_07929</name>
    <name type="ORF">BCIN_02g04190</name>
</gene>
<name>NSA2_BOTFB</name>
<sequence>MPQNEYMERWRKLHGRRLDHEERSRKKAAREGHKASDDAQKLTGLRAKLYQQKRRHEKIQMKKQIKAHEERNVKSSAPNEPSTKPLPQYLLDRSNPTNAKALSSAIKNKRAEKAAKFSVPLPKVRGIAEEEMFKVVKTGKKTAKKSWKRMITKPTFVGPDFTRRPVKYERFIRPMGLRYKKANVTHPELGVTVQLPIISVKKNPQNPMYTQLGVLTRGTIVEVNVSDLGLVTAGGKVVWGRWAQITNNPENDGCVNAVLLV</sequence>
<accession>A6S4J2</accession>
<accession>A0A384J8T1</accession>
<evidence type="ECO:0000250" key="1"/>
<evidence type="ECO:0000250" key="2">
    <source>
        <dbReference type="UniProtKB" id="P40078"/>
    </source>
</evidence>
<evidence type="ECO:0000255" key="3">
    <source>
        <dbReference type="PROSITE-ProRule" id="PRU00768"/>
    </source>
</evidence>
<evidence type="ECO:0000256" key="4">
    <source>
        <dbReference type="SAM" id="MobiDB-lite"/>
    </source>
</evidence>
<evidence type="ECO:0000305" key="5"/>
<reference key="1">
    <citation type="journal article" date="2011" name="PLoS Genet.">
        <title>Genomic analysis of the necrotrophic fungal pathogens Sclerotinia sclerotiorum and Botrytis cinerea.</title>
        <authorList>
            <person name="Amselem J."/>
            <person name="Cuomo C.A."/>
            <person name="van Kan J.A.L."/>
            <person name="Viaud M."/>
            <person name="Benito E.P."/>
            <person name="Couloux A."/>
            <person name="Coutinho P.M."/>
            <person name="de Vries R.P."/>
            <person name="Dyer P.S."/>
            <person name="Fillinger S."/>
            <person name="Fournier E."/>
            <person name="Gout L."/>
            <person name="Hahn M."/>
            <person name="Kohn L."/>
            <person name="Lapalu N."/>
            <person name="Plummer K.M."/>
            <person name="Pradier J.-M."/>
            <person name="Quevillon E."/>
            <person name="Sharon A."/>
            <person name="Simon A."/>
            <person name="ten Have A."/>
            <person name="Tudzynski B."/>
            <person name="Tudzynski P."/>
            <person name="Wincker P."/>
            <person name="Andrew M."/>
            <person name="Anthouard V."/>
            <person name="Beever R.E."/>
            <person name="Beffa R."/>
            <person name="Benoit I."/>
            <person name="Bouzid O."/>
            <person name="Brault B."/>
            <person name="Chen Z."/>
            <person name="Choquer M."/>
            <person name="Collemare J."/>
            <person name="Cotton P."/>
            <person name="Danchin E.G."/>
            <person name="Da Silva C."/>
            <person name="Gautier A."/>
            <person name="Giraud C."/>
            <person name="Giraud T."/>
            <person name="Gonzalez C."/>
            <person name="Grossetete S."/>
            <person name="Gueldener U."/>
            <person name="Henrissat B."/>
            <person name="Howlett B.J."/>
            <person name="Kodira C."/>
            <person name="Kretschmer M."/>
            <person name="Lappartient A."/>
            <person name="Leroch M."/>
            <person name="Levis C."/>
            <person name="Mauceli E."/>
            <person name="Neuveglise C."/>
            <person name="Oeser B."/>
            <person name="Pearson M."/>
            <person name="Poulain J."/>
            <person name="Poussereau N."/>
            <person name="Quesneville H."/>
            <person name="Rascle C."/>
            <person name="Schumacher J."/>
            <person name="Segurens B."/>
            <person name="Sexton A."/>
            <person name="Silva E."/>
            <person name="Sirven C."/>
            <person name="Soanes D.M."/>
            <person name="Talbot N.J."/>
            <person name="Templeton M."/>
            <person name="Yandava C."/>
            <person name="Yarden O."/>
            <person name="Zeng Q."/>
            <person name="Rollins J.A."/>
            <person name="Lebrun M.-H."/>
            <person name="Dickman M."/>
        </authorList>
    </citation>
    <scope>NUCLEOTIDE SEQUENCE [LARGE SCALE GENOMIC DNA]</scope>
    <source>
        <strain>B05.10</strain>
    </source>
</reference>
<reference key="2">
    <citation type="journal article" date="2012" name="Eukaryot. Cell">
        <title>Genome update of Botrytis cinerea strains B05.10 and T4.</title>
        <authorList>
            <person name="Staats M."/>
            <person name="van Kan J.A.L."/>
        </authorList>
    </citation>
    <scope>NUCLEOTIDE SEQUENCE [LARGE SCALE GENOMIC DNA]</scope>
    <scope>GENOME REANNOTATION</scope>
    <source>
        <strain>B05.10</strain>
    </source>
</reference>
<reference key="3">
    <citation type="journal article" date="2017" name="Mol. Plant Pathol.">
        <title>A gapless genome sequence of the fungus Botrytis cinerea.</title>
        <authorList>
            <person name="van Kan J.A.L."/>
            <person name="Stassen J.H.M."/>
            <person name="Mosbach A."/>
            <person name="van der Lee T.A.J."/>
            <person name="Faino L."/>
            <person name="Farmer A.D."/>
            <person name="Papasotiriou D.G."/>
            <person name="Zhou S."/>
            <person name="Seidl M.F."/>
            <person name="Cottam E."/>
            <person name="Edel D."/>
            <person name="Hahn M."/>
            <person name="Schwartz D.C."/>
            <person name="Dietrich R.A."/>
            <person name="Widdison S."/>
            <person name="Scalliet G."/>
        </authorList>
    </citation>
    <scope>NUCLEOTIDE SEQUENCE [LARGE SCALE GENOMIC DNA]</scope>
    <scope>GENOME REANNOTATION</scope>
    <source>
        <strain>B05.10</strain>
    </source>
</reference>